<protein>
    <recommendedName>
        <fullName evidence="1">Large ribosomal subunit protein uL30</fullName>
    </recommendedName>
    <alternativeName>
        <fullName evidence="2">50S ribosomal protein L30</fullName>
    </alternativeName>
</protein>
<accession>Q7DDS9</accession>
<proteinExistence type="inferred from homology"/>
<feature type="chain" id="PRO_0000273812" description="Large ribosomal subunit protein uL30">
    <location>
        <begin position="1"/>
        <end position="61"/>
    </location>
</feature>
<organism>
    <name type="scientific">Neisseria meningitidis serogroup B (strain ATCC BAA-335 / MC58)</name>
    <dbReference type="NCBI Taxonomy" id="122586"/>
    <lineage>
        <taxon>Bacteria</taxon>
        <taxon>Pseudomonadati</taxon>
        <taxon>Pseudomonadota</taxon>
        <taxon>Betaproteobacteria</taxon>
        <taxon>Neisseriales</taxon>
        <taxon>Neisseriaceae</taxon>
        <taxon>Neisseria</taxon>
    </lineage>
</organism>
<evidence type="ECO:0000255" key="1">
    <source>
        <dbReference type="HAMAP-Rule" id="MF_01371"/>
    </source>
</evidence>
<evidence type="ECO:0000305" key="2"/>
<dbReference type="EMBL" id="AE002098">
    <property type="protein sequence ID" value="AAF40618.1"/>
    <property type="molecule type" value="Genomic_DNA"/>
</dbReference>
<dbReference type="RefSeq" id="NP_273218.1">
    <property type="nucleotide sequence ID" value="NC_003112.2"/>
</dbReference>
<dbReference type="RefSeq" id="WP_002215447.1">
    <property type="nucleotide sequence ID" value="NC_003112.2"/>
</dbReference>
<dbReference type="SMR" id="Q7DDS9"/>
<dbReference type="FunCoup" id="Q7DDS9">
    <property type="interactions" value="409"/>
</dbReference>
<dbReference type="STRING" id="122586.NMB0160"/>
<dbReference type="PaxDb" id="122586-NMB0160"/>
<dbReference type="GeneID" id="93387235"/>
<dbReference type="KEGG" id="nme:NMB0160"/>
<dbReference type="PATRIC" id="fig|122586.8.peg.201"/>
<dbReference type="HOGENOM" id="CLU_131047_1_4_4"/>
<dbReference type="InParanoid" id="Q7DDS9"/>
<dbReference type="Proteomes" id="UP000000425">
    <property type="component" value="Chromosome"/>
</dbReference>
<dbReference type="GO" id="GO:0022625">
    <property type="term" value="C:cytosolic large ribosomal subunit"/>
    <property type="evidence" value="ECO:0000318"/>
    <property type="project" value="GO_Central"/>
</dbReference>
<dbReference type="GO" id="GO:0003735">
    <property type="term" value="F:structural constituent of ribosome"/>
    <property type="evidence" value="ECO:0007669"/>
    <property type="project" value="InterPro"/>
</dbReference>
<dbReference type="GO" id="GO:0006412">
    <property type="term" value="P:translation"/>
    <property type="evidence" value="ECO:0007669"/>
    <property type="project" value="UniProtKB-UniRule"/>
</dbReference>
<dbReference type="CDD" id="cd01658">
    <property type="entry name" value="Ribosomal_L30"/>
    <property type="match status" value="1"/>
</dbReference>
<dbReference type="FunFam" id="3.30.1390.20:FF:000001">
    <property type="entry name" value="50S ribosomal protein L30"/>
    <property type="match status" value="1"/>
</dbReference>
<dbReference type="Gene3D" id="3.30.1390.20">
    <property type="entry name" value="Ribosomal protein L30, ferredoxin-like fold domain"/>
    <property type="match status" value="1"/>
</dbReference>
<dbReference type="HAMAP" id="MF_01371_B">
    <property type="entry name" value="Ribosomal_uL30_B"/>
    <property type="match status" value="1"/>
</dbReference>
<dbReference type="InterPro" id="IPR036919">
    <property type="entry name" value="Ribo_uL30_ferredoxin-like_sf"/>
</dbReference>
<dbReference type="InterPro" id="IPR005996">
    <property type="entry name" value="Ribosomal_uL30_bac-type"/>
</dbReference>
<dbReference type="InterPro" id="IPR016082">
    <property type="entry name" value="Ribosomal_uL30_ferredoxin-like"/>
</dbReference>
<dbReference type="NCBIfam" id="TIGR01308">
    <property type="entry name" value="rpmD_bact"/>
    <property type="match status" value="1"/>
</dbReference>
<dbReference type="PANTHER" id="PTHR15892:SF2">
    <property type="entry name" value="LARGE RIBOSOMAL SUBUNIT PROTEIN UL30M"/>
    <property type="match status" value="1"/>
</dbReference>
<dbReference type="PANTHER" id="PTHR15892">
    <property type="entry name" value="MITOCHONDRIAL RIBOSOMAL PROTEIN L30"/>
    <property type="match status" value="1"/>
</dbReference>
<dbReference type="Pfam" id="PF00327">
    <property type="entry name" value="Ribosomal_L30"/>
    <property type="match status" value="1"/>
</dbReference>
<dbReference type="PIRSF" id="PIRSF002211">
    <property type="entry name" value="Ribosomal_L30_bac-type"/>
    <property type="match status" value="1"/>
</dbReference>
<dbReference type="SUPFAM" id="SSF55129">
    <property type="entry name" value="Ribosomal protein L30p/L7e"/>
    <property type="match status" value="1"/>
</dbReference>
<sequence length="61" mass="6946">MAEQKKIRVTLVKSLIGTIESHRACARGLGLRRREHTVEVLDTPENRGMINKISYLLKVES</sequence>
<name>RL30_NEIMB</name>
<gene>
    <name evidence="1" type="primary">rpmD</name>
    <name type="ordered locus">NMB0160</name>
</gene>
<comment type="subunit">
    <text evidence="1">Part of the 50S ribosomal subunit.</text>
</comment>
<comment type="similarity">
    <text evidence="1">Belongs to the universal ribosomal protein uL30 family.</text>
</comment>
<keyword id="KW-1185">Reference proteome</keyword>
<keyword id="KW-0687">Ribonucleoprotein</keyword>
<keyword id="KW-0689">Ribosomal protein</keyword>
<reference key="1">
    <citation type="journal article" date="2000" name="Science">
        <title>Complete genome sequence of Neisseria meningitidis serogroup B strain MC58.</title>
        <authorList>
            <person name="Tettelin H."/>
            <person name="Saunders N.J."/>
            <person name="Heidelberg J.F."/>
            <person name="Jeffries A.C."/>
            <person name="Nelson K.E."/>
            <person name="Eisen J.A."/>
            <person name="Ketchum K.A."/>
            <person name="Hood D.W."/>
            <person name="Peden J.F."/>
            <person name="Dodson R.J."/>
            <person name="Nelson W.C."/>
            <person name="Gwinn M.L."/>
            <person name="DeBoy R.T."/>
            <person name="Peterson J.D."/>
            <person name="Hickey E.K."/>
            <person name="Haft D.H."/>
            <person name="Salzberg S.L."/>
            <person name="White O."/>
            <person name="Fleischmann R.D."/>
            <person name="Dougherty B.A."/>
            <person name="Mason T.M."/>
            <person name="Ciecko A."/>
            <person name="Parksey D.S."/>
            <person name="Blair E."/>
            <person name="Cittone H."/>
            <person name="Clark E.B."/>
            <person name="Cotton M.D."/>
            <person name="Utterback T.R."/>
            <person name="Khouri H.M."/>
            <person name="Qin H."/>
            <person name="Vamathevan J.J."/>
            <person name="Gill J."/>
            <person name="Scarlato V."/>
            <person name="Masignani V."/>
            <person name="Pizza M."/>
            <person name="Grandi G."/>
            <person name="Sun L."/>
            <person name="Smith H.O."/>
            <person name="Fraser C.M."/>
            <person name="Moxon E.R."/>
            <person name="Rappuoli R."/>
            <person name="Venter J.C."/>
        </authorList>
    </citation>
    <scope>NUCLEOTIDE SEQUENCE [LARGE SCALE GENOMIC DNA]</scope>
    <source>
        <strain>ATCC BAA-335 / MC58</strain>
    </source>
</reference>